<gene>
    <name evidence="1" type="primary">pckA</name>
    <name type="ordered locus">YPO0138</name>
    <name type="ordered locus">y3918</name>
    <name type="ordered locus">YP_0139</name>
</gene>
<protein>
    <recommendedName>
        <fullName evidence="1">Phosphoenolpyruvate carboxykinase (ATP)</fullName>
        <shortName evidence="1">PCK</shortName>
        <shortName evidence="1">PEP carboxykinase</shortName>
        <shortName evidence="1">PEPCK</shortName>
        <ecNumber evidence="1">4.1.1.49</ecNumber>
    </recommendedName>
</protein>
<feature type="chain" id="PRO_0000203859" description="Phosphoenolpyruvate carboxykinase (ATP)">
    <location>
        <begin position="1"/>
        <end position="539"/>
    </location>
</feature>
<feature type="binding site" evidence="1">
    <location>
        <position position="64"/>
    </location>
    <ligand>
        <name>substrate</name>
    </ligand>
</feature>
<feature type="binding site" evidence="1">
    <location>
        <position position="206"/>
    </location>
    <ligand>
        <name>substrate</name>
    </ligand>
</feature>
<feature type="binding site" evidence="1">
    <location>
        <position position="212"/>
    </location>
    <ligand>
        <name>ATP</name>
        <dbReference type="ChEBI" id="CHEBI:30616"/>
    </ligand>
</feature>
<feature type="binding site" evidence="1">
    <location>
        <position position="212"/>
    </location>
    <ligand>
        <name>Mn(2+)</name>
        <dbReference type="ChEBI" id="CHEBI:29035"/>
    </ligand>
</feature>
<feature type="binding site" evidence="1">
    <location>
        <position position="212"/>
    </location>
    <ligand>
        <name>substrate</name>
    </ligand>
</feature>
<feature type="binding site" evidence="1">
    <location>
        <position position="231"/>
    </location>
    <ligand>
        <name>ATP</name>
        <dbReference type="ChEBI" id="CHEBI:30616"/>
    </ligand>
</feature>
<feature type="binding site" evidence="1">
    <location>
        <position position="231"/>
    </location>
    <ligand>
        <name>Mn(2+)</name>
        <dbReference type="ChEBI" id="CHEBI:29035"/>
    </ligand>
</feature>
<feature type="binding site" evidence="1">
    <location>
        <begin position="247"/>
        <end position="255"/>
    </location>
    <ligand>
        <name>ATP</name>
        <dbReference type="ChEBI" id="CHEBI:30616"/>
    </ligand>
</feature>
<feature type="binding site" evidence="1">
    <location>
        <position position="268"/>
    </location>
    <ligand>
        <name>Mn(2+)</name>
        <dbReference type="ChEBI" id="CHEBI:29035"/>
    </ligand>
</feature>
<feature type="binding site" evidence="1">
    <location>
        <position position="296"/>
    </location>
    <ligand>
        <name>ATP</name>
        <dbReference type="ChEBI" id="CHEBI:30616"/>
    </ligand>
</feature>
<feature type="binding site" evidence="1">
    <location>
        <position position="332"/>
    </location>
    <ligand>
        <name>ATP</name>
        <dbReference type="ChEBI" id="CHEBI:30616"/>
    </ligand>
</feature>
<feature type="binding site" evidence="1">
    <location>
        <position position="332"/>
    </location>
    <ligand>
        <name>substrate</name>
    </ligand>
</feature>
<feature type="binding site" evidence="1">
    <location>
        <begin position="448"/>
        <end position="449"/>
    </location>
    <ligand>
        <name>ATP</name>
        <dbReference type="ChEBI" id="CHEBI:30616"/>
    </ligand>
</feature>
<feature type="binding site" evidence="1">
    <location>
        <position position="454"/>
    </location>
    <ligand>
        <name>ATP</name>
        <dbReference type="ChEBI" id="CHEBI:30616"/>
    </ligand>
</feature>
<dbReference type="EC" id="4.1.1.49" evidence="1"/>
<dbReference type="EMBL" id="AL590842">
    <property type="protein sequence ID" value="CAL18824.1"/>
    <property type="molecule type" value="Genomic_DNA"/>
</dbReference>
<dbReference type="EMBL" id="AE009952">
    <property type="protein sequence ID" value="AAM87462.1"/>
    <property type="molecule type" value="Genomic_DNA"/>
</dbReference>
<dbReference type="EMBL" id="AE017042">
    <property type="protein sequence ID" value="AAS60417.1"/>
    <property type="molecule type" value="Genomic_DNA"/>
</dbReference>
<dbReference type="PIR" id="AG0017">
    <property type="entry name" value="AG0017"/>
</dbReference>
<dbReference type="RefSeq" id="WP_002208912.1">
    <property type="nucleotide sequence ID" value="NZ_WUCM01000004.1"/>
</dbReference>
<dbReference type="RefSeq" id="YP_002345224.1">
    <property type="nucleotide sequence ID" value="NC_003143.1"/>
</dbReference>
<dbReference type="SMR" id="Q8ZJG9"/>
<dbReference type="IntAct" id="Q8ZJG9">
    <property type="interactions" value="3"/>
</dbReference>
<dbReference type="STRING" id="214092.YPO0138"/>
<dbReference type="PaxDb" id="214092-YPO0138"/>
<dbReference type="DNASU" id="1148865"/>
<dbReference type="EnsemblBacteria" id="AAS60417">
    <property type="protein sequence ID" value="AAS60417"/>
    <property type="gene ID" value="YP_0139"/>
</dbReference>
<dbReference type="GeneID" id="57974462"/>
<dbReference type="KEGG" id="ype:YPO0138"/>
<dbReference type="KEGG" id="ypk:y3918"/>
<dbReference type="KEGG" id="ypm:YP_0139"/>
<dbReference type="PATRIC" id="fig|214092.21.peg.366"/>
<dbReference type="eggNOG" id="COG1866">
    <property type="taxonomic scope" value="Bacteria"/>
</dbReference>
<dbReference type="HOGENOM" id="CLU_018247_0_1_6"/>
<dbReference type="OMA" id="MRYAGEM"/>
<dbReference type="OrthoDB" id="9806325at2"/>
<dbReference type="UniPathway" id="UPA00138"/>
<dbReference type="Proteomes" id="UP000000815">
    <property type="component" value="Chromosome"/>
</dbReference>
<dbReference type="Proteomes" id="UP000001019">
    <property type="component" value="Chromosome"/>
</dbReference>
<dbReference type="Proteomes" id="UP000002490">
    <property type="component" value="Chromosome"/>
</dbReference>
<dbReference type="GO" id="GO:0005829">
    <property type="term" value="C:cytosol"/>
    <property type="evidence" value="ECO:0000318"/>
    <property type="project" value="GO_Central"/>
</dbReference>
<dbReference type="GO" id="GO:0005524">
    <property type="term" value="F:ATP binding"/>
    <property type="evidence" value="ECO:0007669"/>
    <property type="project" value="UniProtKB-UniRule"/>
</dbReference>
<dbReference type="GO" id="GO:0046872">
    <property type="term" value="F:metal ion binding"/>
    <property type="evidence" value="ECO:0007669"/>
    <property type="project" value="UniProtKB-KW"/>
</dbReference>
<dbReference type="GO" id="GO:0004612">
    <property type="term" value="F:phosphoenolpyruvate carboxykinase (ATP) activity"/>
    <property type="evidence" value="ECO:0000318"/>
    <property type="project" value="GO_Central"/>
</dbReference>
<dbReference type="GO" id="GO:0006094">
    <property type="term" value="P:gluconeogenesis"/>
    <property type="evidence" value="ECO:0000318"/>
    <property type="project" value="GO_Central"/>
</dbReference>
<dbReference type="CDD" id="cd00484">
    <property type="entry name" value="PEPCK_ATP"/>
    <property type="match status" value="1"/>
</dbReference>
<dbReference type="FunFam" id="2.170.8.10:FF:000001">
    <property type="entry name" value="Phosphoenolpyruvate carboxykinase (ATP)"/>
    <property type="match status" value="1"/>
</dbReference>
<dbReference type="FunFam" id="3.40.449.10:FF:000001">
    <property type="entry name" value="Phosphoenolpyruvate carboxykinase (ATP)"/>
    <property type="match status" value="1"/>
</dbReference>
<dbReference type="Gene3D" id="3.90.228.20">
    <property type="match status" value="1"/>
</dbReference>
<dbReference type="Gene3D" id="3.40.449.10">
    <property type="entry name" value="Phosphoenolpyruvate Carboxykinase, domain 1"/>
    <property type="match status" value="1"/>
</dbReference>
<dbReference type="Gene3D" id="2.170.8.10">
    <property type="entry name" value="Phosphoenolpyruvate Carboxykinase, domain 2"/>
    <property type="match status" value="1"/>
</dbReference>
<dbReference type="HAMAP" id="MF_00453">
    <property type="entry name" value="PEPCK_ATP"/>
    <property type="match status" value="1"/>
</dbReference>
<dbReference type="InterPro" id="IPR001272">
    <property type="entry name" value="PEP_carboxykinase_ATP"/>
</dbReference>
<dbReference type="InterPro" id="IPR013035">
    <property type="entry name" value="PEP_carboxykinase_C"/>
</dbReference>
<dbReference type="InterPro" id="IPR008210">
    <property type="entry name" value="PEP_carboxykinase_N"/>
</dbReference>
<dbReference type="InterPro" id="IPR015994">
    <property type="entry name" value="PEPCK_ATP_CS"/>
</dbReference>
<dbReference type="NCBIfam" id="TIGR00224">
    <property type="entry name" value="pckA"/>
    <property type="match status" value="1"/>
</dbReference>
<dbReference type="NCBIfam" id="NF006819">
    <property type="entry name" value="PRK09344.1-1"/>
    <property type="match status" value="1"/>
</dbReference>
<dbReference type="NCBIfam" id="NF006820">
    <property type="entry name" value="PRK09344.1-2"/>
    <property type="match status" value="1"/>
</dbReference>
<dbReference type="NCBIfam" id="NF006821">
    <property type="entry name" value="PRK09344.1-3"/>
    <property type="match status" value="1"/>
</dbReference>
<dbReference type="PANTHER" id="PTHR30031:SF0">
    <property type="entry name" value="PHOSPHOENOLPYRUVATE CARBOXYKINASE (ATP)"/>
    <property type="match status" value="1"/>
</dbReference>
<dbReference type="PANTHER" id="PTHR30031">
    <property type="entry name" value="PHOSPHOENOLPYRUVATE CARBOXYKINASE ATP"/>
    <property type="match status" value="1"/>
</dbReference>
<dbReference type="Pfam" id="PF01293">
    <property type="entry name" value="PEPCK_ATP"/>
    <property type="match status" value="1"/>
</dbReference>
<dbReference type="PIRSF" id="PIRSF006294">
    <property type="entry name" value="PEP_crbxkin"/>
    <property type="match status" value="1"/>
</dbReference>
<dbReference type="SUPFAM" id="SSF68923">
    <property type="entry name" value="PEP carboxykinase N-terminal domain"/>
    <property type="match status" value="1"/>
</dbReference>
<dbReference type="SUPFAM" id="SSF53795">
    <property type="entry name" value="PEP carboxykinase-like"/>
    <property type="match status" value="1"/>
</dbReference>
<dbReference type="PROSITE" id="PS00532">
    <property type="entry name" value="PEPCK_ATP"/>
    <property type="match status" value="1"/>
</dbReference>
<proteinExistence type="inferred from homology"/>
<evidence type="ECO:0000255" key="1">
    <source>
        <dbReference type="HAMAP-Rule" id="MF_00453"/>
    </source>
</evidence>
<comment type="function">
    <text evidence="1">Involved in the gluconeogenesis. Catalyzes the conversion of oxaloacetate (OAA) to phosphoenolpyruvate (PEP) through direct phosphoryl transfer between the nucleoside triphosphate and OAA.</text>
</comment>
<comment type="catalytic activity">
    <reaction evidence="1">
        <text>oxaloacetate + ATP = phosphoenolpyruvate + ADP + CO2</text>
        <dbReference type="Rhea" id="RHEA:18617"/>
        <dbReference type="ChEBI" id="CHEBI:16452"/>
        <dbReference type="ChEBI" id="CHEBI:16526"/>
        <dbReference type="ChEBI" id="CHEBI:30616"/>
        <dbReference type="ChEBI" id="CHEBI:58702"/>
        <dbReference type="ChEBI" id="CHEBI:456216"/>
        <dbReference type="EC" id="4.1.1.49"/>
    </reaction>
</comment>
<comment type="cofactor">
    <cofactor evidence="1">
        <name>Mn(2+)</name>
        <dbReference type="ChEBI" id="CHEBI:29035"/>
    </cofactor>
    <text evidence="1">Binds 1 Mn(2+) ion per subunit.</text>
</comment>
<comment type="pathway">
    <text evidence="1">Carbohydrate biosynthesis; gluconeogenesis.</text>
</comment>
<comment type="subunit">
    <text evidence="1">Monomer.</text>
</comment>
<comment type="subcellular location">
    <subcellularLocation>
        <location evidence="1">Cytoplasm</location>
    </subcellularLocation>
</comment>
<comment type="similarity">
    <text evidence="1">Belongs to the phosphoenolpyruvate carboxykinase (ATP) family.</text>
</comment>
<keyword id="KW-0067">ATP-binding</keyword>
<keyword id="KW-0963">Cytoplasm</keyword>
<keyword id="KW-0210">Decarboxylase</keyword>
<keyword id="KW-0312">Gluconeogenesis</keyword>
<keyword id="KW-0456">Lyase</keyword>
<keyword id="KW-0464">Manganese</keyword>
<keyword id="KW-0479">Metal-binding</keyword>
<keyword id="KW-0547">Nucleotide-binding</keyword>
<keyword id="KW-1185">Reference proteome</keyword>
<accession>Q8ZJG9</accession>
<accession>Q0WKG4</accession>
<reference key="1">
    <citation type="journal article" date="2001" name="Nature">
        <title>Genome sequence of Yersinia pestis, the causative agent of plague.</title>
        <authorList>
            <person name="Parkhill J."/>
            <person name="Wren B.W."/>
            <person name="Thomson N.R."/>
            <person name="Titball R.W."/>
            <person name="Holden M.T.G."/>
            <person name="Prentice M.B."/>
            <person name="Sebaihia M."/>
            <person name="James K.D."/>
            <person name="Churcher C.M."/>
            <person name="Mungall K.L."/>
            <person name="Baker S."/>
            <person name="Basham D."/>
            <person name="Bentley S.D."/>
            <person name="Brooks K."/>
            <person name="Cerdeno-Tarraga A.-M."/>
            <person name="Chillingworth T."/>
            <person name="Cronin A."/>
            <person name="Davies R.M."/>
            <person name="Davis P."/>
            <person name="Dougan G."/>
            <person name="Feltwell T."/>
            <person name="Hamlin N."/>
            <person name="Holroyd S."/>
            <person name="Jagels K."/>
            <person name="Karlyshev A.V."/>
            <person name="Leather S."/>
            <person name="Moule S."/>
            <person name="Oyston P.C.F."/>
            <person name="Quail M.A."/>
            <person name="Rutherford K.M."/>
            <person name="Simmonds M."/>
            <person name="Skelton J."/>
            <person name="Stevens K."/>
            <person name="Whitehead S."/>
            <person name="Barrell B.G."/>
        </authorList>
    </citation>
    <scope>NUCLEOTIDE SEQUENCE [LARGE SCALE GENOMIC DNA]</scope>
    <source>
        <strain>CO-92 / Biovar Orientalis</strain>
    </source>
</reference>
<reference key="2">
    <citation type="journal article" date="2002" name="J. Bacteriol.">
        <title>Genome sequence of Yersinia pestis KIM.</title>
        <authorList>
            <person name="Deng W."/>
            <person name="Burland V."/>
            <person name="Plunkett G. III"/>
            <person name="Boutin A."/>
            <person name="Mayhew G.F."/>
            <person name="Liss P."/>
            <person name="Perna N.T."/>
            <person name="Rose D.J."/>
            <person name="Mau B."/>
            <person name="Zhou S."/>
            <person name="Schwartz D.C."/>
            <person name="Fetherston J.D."/>
            <person name="Lindler L.E."/>
            <person name="Brubaker R.R."/>
            <person name="Plano G.V."/>
            <person name="Straley S.C."/>
            <person name="McDonough K.A."/>
            <person name="Nilles M.L."/>
            <person name="Matson J.S."/>
            <person name="Blattner F.R."/>
            <person name="Perry R.D."/>
        </authorList>
    </citation>
    <scope>NUCLEOTIDE SEQUENCE [LARGE SCALE GENOMIC DNA]</scope>
    <source>
        <strain>KIM10+ / Biovar Mediaevalis</strain>
    </source>
</reference>
<reference key="3">
    <citation type="journal article" date="2004" name="DNA Res.">
        <title>Complete genome sequence of Yersinia pestis strain 91001, an isolate avirulent to humans.</title>
        <authorList>
            <person name="Song Y."/>
            <person name="Tong Z."/>
            <person name="Wang J."/>
            <person name="Wang L."/>
            <person name="Guo Z."/>
            <person name="Han Y."/>
            <person name="Zhang J."/>
            <person name="Pei D."/>
            <person name="Zhou D."/>
            <person name="Qin H."/>
            <person name="Pang X."/>
            <person name="Han Y."/>
            <person name="Zhai J."/>
            <person name="Li M."/>
            <person name="Cui B."/>
            <person name="Qi Z."/>
            <person name="Jin L."/>
            <person name="Dai R."/>
            <person name="Chen F."/>
            <person name="Li S."/>
            <person name="Ye C."/>
            <person name="Du Z."/>
            <person name="Lin W."/>
            <person name="Wang J."/>
            <person name="Yu J."/>
            <person name="Yang H."/>
            <person name="Wang J."/>
            <person name="Huang P."/>
            <person name="Yang R."/>
        </authorList>
    </citation>
    <scope>NUCLEOTIDE SEQUENCE [LARGE SCALE GENOMIC DNA]</scope>
    <source>
        <strain>91001 / Biovar Mediaevalis</strain>
    </source>
</reference>
<organism>
    <name type="scientific">Yersinia pestis</name>
    <dbReference type="NCBI Taxonomy" id="632"/>
    <lineage>
        <taxon>Bacteria</taxon>
        <taxon>Pseudomonadati</taxon>
        <taxon>Pseudomonadota</taxon>
        <taxon>Gammaproteobacteria</taxon>
        <taxon>Enterobacterales</taxon>
        <taxon>Yersiniaceae</taxon>
        <taxon>Yersinia</taxon>
    </lineage>
</organism>
<name>PCKA_YERPE</name>
<sequence length="539" mass="59348">MSVKGITPQELAAYGIHNVSEIVYNPSYDLLFEEETKPTLEGYERGTLTTTGAIAVDTGIFTGRSPKDKYIVRDAITQDTVWWADQGKGKNDNKPLSQEIWNHLKGLVTEQLSGKRLFVVDTFCGANADTRLQVRFITEVAWQAHFVKNMFIRPSDEELARFEPDFIVMNGAKCTNPQWKEQGLNSENFVAFNLTERMQLIGGTWYGGEMKKGMFSMMNYLLPLKGIASMHCSANVGEKGDVAIFFGLSGTGKTTLSTDPKRKLIGDDEHGWDDDGVFNFEGGCYAKTIKLSEEAEPDIYHAIKRDALLENVVVLADGTVDFNDGSKTENTRVSYPIYHIDNIVKPVSKAGHATKVIFLTADAFGVLPPVSRLTANQTQYHFLSGFTAKLAGTERGVTEPTPTFSACFGAAFLSLHPTQYAEVLVKRMQAVGAQAYLVNTGWNGTGKRISIKDTRAIIDAILNGEIDKAETFTLPIFDLAVPMALPGVNPDILDPRDTYADKAQWQEKAEDLAKRFATNFDKYTDTPAGAALVSAGPKI</sequence>